<keyword id="KW-0004">4Fe-4S</keyword>
<keyword id="KW-1003">Cell membrane</keyword>
<keyword id="KW-0408">Iron</keyword>
<keyword id="KW-0411">Iron-sulfur</keyword>
<keyword id="KW-0472">Membrane</keyword>
<keyword id="KW-0479">Metal-binding</keyword>
<keyword id="KW-0520">NAD</keyword>
<keyword id="KW-0874">Quinone</keyword>
<keyword id="KW-1278">Translocase</keyword>
<keyword id="KW-0813">Transport</keyword>
<comment type="function">
    <text evidence="1">NDH-1 shuttles electrons from NADH, via FMN and iron-sulfur (Fe-S) centers, to quinones in the respiratory chain. The immediate electron acceptor for the enzyme in this species is believed to be a menaquinone. Couples the redox reaction to proton translocation (for every two electrons transferred, four hydrogen ions are translocated across the cytoplasmic membrane), and thus conserves the redox energy in a proton gradient.</text>
</comment>
<comment type="catalytic activity">
    <reaction evidence="1">
        <text>a quinone + NADH + 5 H(+)(in) = a quinol + NAD(+) + 4 H(+)(out)</text>
        <dbReference type="Rhea" id="RHEA:57888"/>
        <dbReference type="ChEBI" id="CHEBI:15378"/>
        <dbReference type="ChEBI" id="CHEBI:24646"/>
        <dbReference type="ChEBI" id="CHEBI:57540"/>
        <dbReference type="ChEBI" id="CHEBI:57945"/>
        <dbReference type="ChEBI" id="CHEBI:132124"/>
    </reaction>
</comment>
<comment type="cofactor">
    <cofactor evidence="1">
        <name>[4Fe-4S] cluster</name>
        <dbReference type="ChEBI" id="CHEBI:49883"/>
    </cofactor>
    <text evidence="1">Binds 1 [4Fe-4S] cluster.</text>
</comment>
<comment type="subunit">
    <text evidence="1">NDH-1 is composed of 14 different subunits. Subunits NuoB, C, D, E, F, and G constitute the peripheral sector of the complex.</text>
</comment>
<comment type="subcellular location">
    <subcellularLocation>
        <location evidence="1">Cell membrane</location>
        <topology evidence="1">Peripheral membrane protein</topology>
        <orientation evidence="1">Cytoplasmic side</orientation>
    </subcellularLocation>
</comment>
<comment type="similarity">
    <text evidence="1">Belongs to the complex I 20 kDa subunit family.</text>
</comment>
<dbReference type="EC" id="7.1.1.-" evidence="1"/>
<dbReference type="EMBL" id="CP001638">
    <property type="protein sequence ID" value="ACS25940.1"/>
    <property type="molecule type" value="Genomic_DNA"/>
</dbReference>
<dbReference type="SMR" id="C5D987"/>
<dbReference type="STRING" id="471223.GWCH70_3300"/>
<dbReference type="KEGG" id="gwc:GWCH70_3300"/>
<dbReference type="eggNOG" id="COG0377">
    <property type="taxonomic scope" value="Bacteria"/>
</dbReference>
<dbReference type="HOGENOM" id="CLU_055737_7_3_9"/>
<dbReference type="OrthoDB" id="9786737at2"/>
<dbReference type="GO" id="GO:0005886">
    <property type="term" value="C:plasma membrane"/>
    <property type="evidence" value="ECO:0007669"/>
    <property type="project" value="UniProtKB-SubCell"/>
</dbReference>
<dbReference type="GO" id="GO:0045271">
    <property type="term" value="C:respiratory chain complex I"/>
    <property type="evidence" value="ECO:0007669"/>
    <property type="project" value="TreeGrafter"/>
</dbReference>
<dbReference type="GO" id="GO:0051539">
    <property type="term" value="F:4 iron, 4 sulfur cluster binding"/>
    <property type="evidence" value="ECO:0007669"/>
    <property type="project" value="UniProtKB-KW"/>
</dbReference>
<dbReference type="GO" id="GO:0005506">
    <property type="term" value="F:iron ion binding"/>
    <property type="evidence" value="ECO:0007669"/>
    <property type="project" value="UniProtKB-UniRule"/>
</dbReference>
<dbReference type="GO" id="GO:0008137">
    <property type="term" value="F:NADH dehydrogenase (ubiquinone) activity"/>
    <property type="evidence" value="ECO:0007669"/>
    <property type="project" value="InterPro"/>
</dbReference>
<dbReference type="GO" id="GO:0050136">
    <property type="term" value="F:NADH:ubiquinone reductase (non-electrogenic) activity"/>
    <property type="evidence" value="ECO:0007669"/>
    <property type="project" value="UniProtKB-UniRule"/>
</dbReference>
<dbReference type="GO" id="GO:0048038">
    <property type="term" value="F:quinone binding"/>
    <property type="evidence" value="ECO:0007669"/>
    <property type="project" value="UniProtKB-KW"/>
</dbReference>
<dbReference type="GO" id="GO:0009060">
    <property type="term" value="P:aerobic respiration"/>
    <property type="evidence" value="ECO:0007669"/>
    <property type="project" value="TreeGrafter"/>
</dbReference>
<dbReference type="GO" id="GO:0015990">
    <property type="term" value="P:electron transport coupled proton transport"/>
    <property type="evidence" value="ECO:0007669"/>
    <property type="project" value="TreeGrafter"/>
</dbReference>
<dbReference type="FunFam" id="3.40.50.12280:FF:000002">
    <property type="entry name" value="NADH-quinone oxidoreductase subunit B"/>
    <property type="match status" value="1"/>
</dbReference>
<dbReference type="Gene3D" id="3.40.50.12280">
    <property type="match status" value="1"/>
</dbReference>
<dbReference type="HAMAP" id="MF_01356">
    <property type="entry name" value="NDH1_NuoB"/>
    <property type="match status" value="1"/>
</dbReference>
<dbReference type="InterPro" id="IPR006137">
    <property type="entry name" value="NADH_UbQ_OxRdtase-like_20kDa"/>
</dbReference>
<dbReference type="InterPro" id="IPR006138">
    <property type="entry name" value="NADH_UQ_OxRdtase_20Kd_su"/>
</dbReference>
<dbReference type="NCBIfam" id="TIGR01957">
    <property type="entry name" value="nuoB_fam"/>
    <property type="match status" value="1"/>
</dbReference>
<dbReference type="NCBIfam" id="NF005012">
    <property type="entry name" value="PRK06411.1"/>
    <property type="match status" value="1"/>
</dbReference>
<dbReference type="PANTHER" id="PTHR11995">
    <property type="entry name" value="NADH DEHYDROGENASE"/>
    <property type="match status" value="1"/>
</dbReference>
<dbReference type="PANTHER" id="PTHR11995:SF14">
    <property type="entry name" value="NADH DEHYDROGENASE [UBIQUINONE] IRON-SULFUR PROTEIN 7, MITOCHONDRIAL"/>
    <property type="match status" value="1"/>
</dbReference>
<dbReference type="Pfam" id="PF01058">
    <property type="entry name" value="Oxidored_q6"/>
    <property type="match status" value="1"/>
</dbReference>
<dbReference type="SUPFAM" id="SSF56770">
    <property type="entry name" value="HydA/Nqo6-like"/>
    <property type="match status" value="1"/>
</dbReference>
<gene>
    <name evidence="1" type="primary">nuoB</name>
    <name type="ordered locus">GWCH70_3300</name>
</gene>
<proteinExistence type="inferred from homology"/>
<protein>
    <recommendedName>
        <fullName evidence="1">NADH-quinone oxidoreductase subunit B</fullName>
        <ecNumber evidence="1">7.1.1.-</ecNumber>
    </recommendedName>
    <alternativeName>
        <fullName evidence="1">NADH dehydrogenase I subunit B</fullName>
    </alternativeName>
    <alternativeName>
        <fullName evidence="1">NDH-1 subunit B</fullName>
    </alternativeName>
</protein>
<organism>
    <name type="scientific">Geobacillus sp. (strain WCH70)</name>
    <dbReference type="NCBI Taxonomy" id="471223"/>
    <lineage>
        <taxon>Bacteria</taxon>
        <taxon>Bacillati</taxon>
        <taxon>Bacillota</taxon>
        <taxon>Bacilli</taxon>
        <taxon>Bacillales</taxon>
        <taxon>Anoxybacillaceae</taxon>
        <taxon>Geobacillus</taxon>
    </lineage>
</organism>
<name>NUOB_GEOSW</name>
<accession>C5D987</accession>
<feature type="chain" id="PRO_1000214861" description="NADH-quinone oxidoreductase subunit B">
    <location>
        <begin position="1"/>
        <end position="170"/>
    </location>
</feature>
<feature type="binding site" evidence="1">
    <location>
        <position position="46"/>
    </location>
    <ligand>
        <name>[4Fe-4S] cluster</name>
        <dbReference type="ChEBI" id="CHEBI:49883"/>
    </ligand>
</feature>
<feature type="binding site" evidence="1">
    <location>
        <position position="47"/>
    </location>
    <ligand>
        <name>[4Fe-4S] cluster</name>
        <dbReference type="ChEBI" id="CHEBI:49883"/>
    </ligand>
</feature>
<feature type="binding site" evidence="1">
    <location>
        <position position="111"/>
    </location>
    <ligand>
        <name>[4Fe-4S] cluster</name>
        <dbReference type="ChEBI" id="CHEBI:49883"/>
    </ligand>
</feature>
<feature type="binding site" evidence="1">
    <location>
        <position position="141"/>
    </location>
    <ligand>
        <name>[4Fe-4S] cluster</name>
        <dbReference type="ChEBI" id="CHEBI:49883"/>
    </ligand>
</feature>
<sequence>MDVKWLDVPEGDTEELKRNVFFTTLEQLKAWARSNSLWPLTFGLACCAIEMMGVGGAHYDLDRFGSFFRASPRQSDVMIVSGTVTKKMAPIIRRLYDQMPEPKWVIAMGSCATAGGPYVKSYSVVKGVDQIVPVDVYIPGCPPNPAALIYGINKLKEKIRYEAKTGKKVL</sequence>
<evidence type="ECO:0000255" key="1">
    <source>
        <dbReference type="HAMAP-Rule" id="MF_01356"/>
    </source>
</evidence>
<reference key="1">
    <citation type="submission" date="2009-06" db="EMBL/GenBank/DDBJ databases">
        <title>Complete sequence of chromosome of Geopacillus sp. WCH70.</title>
        <authorList>
            <consortium name="US DOE Joint Genome Institute"/>
            <person name="Lucas S."/>
            <person name="Copeland A."/>
            <person name="Lapidus A."/>
            <person name="Glavina del Rio T."/>
            <person name="Dalin E."/>
            <person name="Tice H."/>
            <person name="Bruce D."/>
            <person name="Goodwin L."/>
            <person name="Pitluck S."/>
            <person name="Chertkov O."/>
            <person name="Brettin T."/>
            <person name="Detter J.C."/>
            <person name="Han C."/>
            <person name="Larimer F."/>
            <person name="Land M."/>
            <person name="Hauser L."/>
            <person name="Kyrpides N."/>
            <person name="Mikhailova N."/>
            <person name="Brumm P."/>
            <person name="Mead D.A."/>
            <person name="Richardson P."/>
        </authorList>
    </citation>
    <scope>NUCLEOTIDE SEQUENCE [LARGE SCALE GENOMIC DNA]</scope>
    <source>
        <strain>WCH70</strain>
    </source>
</reference>